<protein>
    <recommendedName>
        <fullName evidence="1">CTP synthase</fullName>
        <ecNumber evidence="1">6.3.4.2</ecNumber>
    </recommendedName>
    <alternativeName>
        <fullName evidence="1">Cytidine 5'-triphosphate synthase</fullName>
    </alternativeName>
    <alternativeName>
        <fullName evidence="1">Cytidine triphosphate synthetase</fullName>
        <shortName evidence="1">CTP synthetase</shortName>
        <shortName evidence="1">CTPS</shortName>
    </alternativeName>
    <alternativeName>
        <fullName evidence="1">UTP--ammonia ligase</fullName>
    </alternativeName>
</protein>
<accession>A9BN39</accession>
<proteinExistence type="inferred from homology"/>
<name>PYRG_DELAS</name>
<feature type="chain" id="PRO_1000139434" description="CTP synthase">
    <location>
        <begin position="1"/>
        <end position="552"/>
    </location>
</feature>
<feature type="domain" description="Glutamine amidotransferase type-1" evidence="1">
    <location>
        <begin position="295"/>
        <end position="548"/>
    </location>
</feature>
<feature type="region of interest" description="Amidoligase domain" evidence="1">
    <location>
        <begin position="1"/>
        <end position="270"/>
    </location>
</feature>
<feature type="active site" description="Nucleophile; for glutamine hydrolysis" evidence="1">
    <location>
        <position position="384"/>
    </location>
</feature>
<feature type="active site" evidence="1">
    <location>
        <position position="521"/>
    </location>
</feature>
<feature type="active site" evidence="1">
    <location>
        <position position="523"/>
    </location>
</feature>
<feature type="binding site" evidence="1">
    <location>
        <position position="13"/>
    </location>
    <ligand>
        <name>CTP</name>
        <dbReference type="ChEBI" id="CHEBI:37563"/>
        <note>allosteric inhibitor</note>
    </ligand>
</feature>
<feature type="binding site" evidence="1">
    <location>
        <position position="13"/>
    </location>
    <ligand>
        <name>UTP</name>
        <dbReference type="ChEBI" id="CHEBI:46398"/>
    </ligand>
</feature>
<feature type="binding site" evidence="1">
    <location>
        <begin position="14"/>
        <end position="19"/>
    </location>
    <ligand>
        <name>ATP</name>
        <dbReference type="ChEBI" id="CHEBI:30616"/>
    </ligand>
</feature>
<feature type="binding site" evidence="1">
    <location>
        <position position="71"/>
    </location>
    <ligand>
        <name>ATP</name>
        <dbReference type="ChEBI" id="CHEBI:30616"/>
    </ligand>
</feature>
<feature type="binding site" evidence="1">
    <location>
        <position position="71"/>
    </location>
    <ligand>
        <name>Mg(2+)</name>
        <dbReference type="ChEBI" id="CHEBI:18420"/>
    </ligand>
</feature>
<feature type="binding site" evidence="1">
    <location>
        <position position="144"/>
    </location>
    <ligand>
        <name>Mg(2+)</name>
        <dbReference type="ChEBI" id="CHEBI:18420"/>
    </ligand>
</feature>
<feature type="binding site" evidence="1">
    <location>
        <begin position="151"/>
        <end position="153"/>
    </location>
    <ligand>
        <name>CTP</name>
        <dbReference type="ChEBI" id="CHEBI:37563"/>
        <note>allosteric inhibitor</note>
    </ligand>
</feature>
<feature type="binding site" evidence="1">
    <location>
        <begin position="191"/>
        <end position="196"/>
    </location>
    <ligand>
        <name>CTP</name>
        <dbReference type="ChEBI" id="CHEBI:37563"/>
        <note>allosteric inhibitor</note>
    </ligand>
</feature>
<feature type="binding site" evidence="1">
    <location>
        <begin position="191"/>
        <end position="196"/>
    </location>
    <ligand>
        <name>UTP</name>
        <dbReference type="ChEBI" id="CHEBI:46398"/>
    </ligand>
</feature>
<feature type="binding site" evidence="1">
    <location>
        <position position="227"/>
    </location>
    <ligand>
        <name>CTP</name>
        <dbReference type="ChEBI" id="CHEBI:37563"/>
        <note>allosteric inhibitor</note>
    </ligand>
</feature>
<feature type="binding site" evidence="1">
    <location>
        <position position="227"/>
    </location>
    <ligand>
        <name>UTP</name>
        <dbReference type="ChEBI" id="CHEBI:46398"/>
    </ligand>
</feature>
<feature type="binding site" evidence="1">
    <location>
        <position position="357"/>
    </location>
    <ligand>
        <name>L-glutamine</name>
        <dbReference type="ChEBI" id="CHEBI:58359"/>
    </ligand>
</feature>
<feature type="binding site" evidence="1">
    <location>
        <begin position="385"/>
        <end position="388"/>
    </location>
    <ligand>
        <name>L-glutamine</name>
        <dbReference type="ChEBI" id="CHEBI:58359"/>
    </ligand>
</feature>
<feature type="binding site" evidence="1">
    <location>
        <position position="408"/>
    </location>
    <ligand>
        <name>L-glutamine</name>
        <dbReference type="ChEBI" id="CHEBI:58359"/>
    </ligand>
</feature>
<feature type="binding site" evidence="1">
    <location>
        <position position="474"/>
    </location>
    <ligand>
        <name>L-glutamine</name>
        <dbReference type="ChEBI" id="CHEBI:58359"/>
    </ligand>
</feature>
<dbReference type="EC" id="6.3.4.2" evidence="1"/>
<dbReference type="EMBL" id="CP000884">
    <property type="protein sequence ID" value="ABX37734.1"/>
    <property type="molecule type" value="Genomic_DNA"/>
</dbReference>
<dbReference type="RefSeq" id="WP_012206904.1">
    <property type="nucleotide sequence ID" value="NC_010002.1"/>
</dbReference>
<dbReference type="SMR" id="A9BN39"/>
<dbReference type="STRING" id="398578.Daci_5105"/>
<dbReference type="GeneID" id="24113937"/>
<dbReference type="KEGG" id="dac:Daci_5105"/>
<dbReference type="eggNOG" id="COG0504">
    <property type="taxonomic scope" value="Bacteria"/>
</dbReference>
<dbReference type="HOGENOM" id="CLU_011675_5_0_4"/>
<dbReference type="UniPathway" id="UPA00159">
    <property type="reaction ID" value="UER00277"/>
</dbReference>
<dbReference type="Proteomes" id="UP000000784">
    <property type="component" value="Chromosome"/>
</dbReference>
<dbReference type="GO" id="GO:0005829">
    <property type="term" value="C:cytosol"/>
    <property type="evidence" value="ECO:0007669"/>
    <property type="project" value="TreeGrafter"/>
</dbReference>
<dbReference type="GO" id="GO:0005524">
    <property type="term" value="F:ATP binding"/>
    <property type="evidence" value="ECO:0007669"/>
    <property type="project" value="UniProtKB-KW"/>
</dbReference>
<dbReference type="GO" id="GO:0003883">
    <property type="term" value="F:CTP synthase activity"/>
    <property type="evidence" value="ECO:0007669"/>
    <property type="project" value="UniProtKB-UniRule"/>
</dbReference>
<dbReference type="GO" id="GO:0004359">
    <property type="term" value="F:glutaminase activity"/>
    <property type="evidence" value="ECO:0007669"/>
    <property type="project" value="RHEA"/>
</dbReference>
<dbReference type="GO" id="GO:0042802">
    <property type="term" value="F:identical protein binding"/>
    <property type="evidence" value="ECO:0007669"/>
    <property type="project" value="TreeGrafter"/>
</dbReference>
<dbReference type="GO" id="GO:0046872">
    <property type="term" value="F:metal ion binding"/>
    <property type="evidence" value="ECO:0007669"/>
    <property type="project" value="UniProtKB-KW"/>
</dbReference>
<dbReference type="GO" id="GO:0044210">
    <property type="term" value="P:'de novo' CTP biosynthetic process"/>
    <property type="evidence" value="ECO:0007669"/>
    <property type="project" value="UniProtKB-UniRule"/>
</dbReference>
<dbReference type="GO" id="GO:0019856">
    <property type="term" value="P:pyrimidine nucleobase biosynthetic process"/>
    <property type="evidence" value="ECO:0007669"/>
    <property type="project" value="TreeGrafter"/>
</dbReference>
<dbReference type="CDD" id="cd03113">
    <property type="entry name" value="CTPS_N"/>
    <property type="match status" value="1"/>
</dbReference>
<dbReference type="CDD" id="cd01746">
    <property type="entry name" value="GATase1_CTP_Synthase"/>
    <property type="match status" value="1"/>
</dbReference>
<dbReference type="FunFam" id="3.40.50.300:FF:000009">
    <property type="entry name" value="CTP synthase"/>
    <property type="match status" value="1"/>
</dbReference>
<dbReference type="FunFam" id="3.40.50.880:FF:000002">
    <property type="entry name" value="CTP synthase"/>
    <property type="match status" value="1"/>
</dbReference>
<dbReference type="Gene3D" id="3.40.50.880">
    <property type="match status" value="1"/>
</dbReference>
<dbReference type="Gene3D" id="3.40.50.300">
    <property type="entry name" value="P-loop containing nucleotide triphosphate hydrolases"/>
    <property type="match status" value="1"/>
</dbReference>
<dbReference type="HAMAP" id="MF_01227">
    <property type="entry name" value="PyrG"/>
    <property type="match status" value="1"/>
</dbReference>
<dbReference type="InterPro" id="IPR029062">
    <property type="entry name" value="Class_I_gatase-like"/>
</dbReference>
<dbReference type="InterPro" id="IPR004468">
    <property type="entry name" value="CTP_synthase"/>
</dbReference>
<dbReference type="InterPro" id="IPR017456">
    <property type="entry name" value="CTP_synthase_N"/>
</dbReference>
<dbReference type="InterPro" id="IPR017926">
    <property type="entry name" value="GATASE"/>
</dbReference>
<dbReference type="InterPro" id="IPR033828">
    <property type="entry name" value="GATase1_CTP_Synthase"/>
</dbReference>
<dbReference type="InterPro" id="IPR027417">
    <property type="entry name" value="P-loop_NTPase"/>
</dbReference>
<dbReference type="NCBIfam" id="NF003792">
    <property type="entry name" value="PRK05380.1"/>
    <property type="match status" value="1"/>
</dbReference>
<dbReference type="NCBIfam" id="TIGR00337">
    <property type="entry name" value="PyrG"/>
    <property type="match status" value="1"/>
</dbReference>
<dbReference type="PANTHER" id="PTHR11550">
    <property type="entry name" value="CTP SYNTHASE"/>
    <property type="match status" value="1"/>
</dbReference>
<dbReference type="PANTHER" id="PTHR11550:SF0">
    <property type="entry name" value="CTP SYNTHASE-RELATED"/>
    <property type="match status" value="1"/>
</dbReference>
<dbReference type="Pfam" id="PF06418">
    <property type="entry name" value="CTP_synth_N"/>
    <property type="match status" value="1"/>
</dbReference>
<dbReference type="Pfam" id="PF00117">
    <property type="entry name" value="GATase"/>
    <property type="match status" value="1"/>
</dbReference>
<dbReference type="SUPFAM" id="SSF52317">
    <property type="entry name" value="Class I glutamine amidotransferase-like"/>
    <property type="match status" value="1"/>
</dbReference>
<dbReference type="SUPFAM" id="SSF52540">
    <property type="entry name" value="P-loop containing nucleoside triphosphate hydrolases"/>
    <property type="match status" value="1"/>
</dbReference>
<dbReference type="PROSITE" id="PS51273">
    <property type="entry name" value="GATASE_TYPE_1"/>
    <property type="match status" value="1"/>
</dbReference>
<gene>
    <name evidence="1" type="primary">pyrG</name>
    <name type="ordered locus">Daci_5105</name>
</gene>
<reference key="1">
    <citation type="submission" date="2007-11" db="EMBL/GenBank/DDBJ databases">
        <title>Complete sequence of Delftia acidovorans DSM 14801 / SPH-1.</title>
        <authorList>
            <person name="Copeland A."/>
            <person name="Lucas S."/>
            <person name="Lapidus A."/>
            <person name="Barry K."/>
            <person name="Glavina del Rio T."/>
            <person name="Dalin E."/>
            <person name="Tice H."/>
            <person name="Pitluck S."/>
            <person name="Lowry S."/>
            <person name="Clum A."/>
            <person name="Schmutz J."/>
            <person name="Larimer F."/>
            <person name="Land M."/>
            <person name="Hauser L."/>
            <person name="Kyrpides N."/>
            <person name="Kim E."/>
            <person name="Schleheck D."/>
            <person name="Richardson P."/>
        </authorList>
    </citation>
    <scope>NUCLEOTIDE SEQUENCE [LARGE SCALE GENOMIC DNA]</scope>
    <source>
        <strain>DSM 14801 / SPH-1</strain>
    </source>
</reference>
<keyword id="KW-0067">ATP-binding</keyword>
<keyword id="KW-0315">Glutamine amidotransferase</keyword>
<keyword id="KW-0436">Ligase</keyword>
<keyword id="KW-0460">Magnesium</keyword>
<keyword id="KW-0479">Metal-binding</keyword>
<keyword id="KW-0547">Nucleotide-binding</keyword>
<keyword id="KW-0665">Pyrimidine biosynthesis</keyword>
<keyword id="KW-1185">Reference proteome</keyword>
<sequence>MTKFVFVTGGVVSSLGKGIASASLAAILESRGLKVTLIKLDPYINVDPGTMSPFQHGEVFVTDDGAETDLDLGHYERFIETRMKQSNNFTTGRIYQSVLEKERRGDYLGKTVQVIPHVTNEIQEYIKRGAGLGTPDAVDVAICEVGGTVGDIESLPFLEAVRQLALKQGPNNTAFVHLTYLPWIATAGELKTKPTQHTVQKLREIGIQPDALLCRAQHQVPEEEKEKISLFTNVPEWGVISMWDVDTIYKVPRMLHEQGLDGLICDKLRLNTPPTNLKRWDDLVHETEHPQGEVKIAMVGKYVELSDAYKSVNEALKHAGMQSHVAVKITHVDSETISDANARDKLSQYDAILVPGGFGSRGVEGKISTARYARENKVPYLGICLGMQVATIEYARHVAGLEGANSTEFDPKSANPVIALITEWKDADGTVKTRDENSDLGGTMRLGAQSSDVQAGTLAHSIYGDVVTERHRHRYEANVQYLDQLREAGLVISALTQREQLTEIVELPKEVHPWYIGVQFHPEFKSTPWSGHPLFNAFVKAAIERQKAPRKP</sequence>
<organism>
    <name type="scientific">Delftia acidovorans (strain DSM 14801 / SPH-1)</name>
    <dbReference type="NCBI Taxonomy" id="398578"/>
    <lineage>
        <taxon>Bacteria</taxon>
        <taxon>Pseudomonadati</taxon>
        <taxon>Pseudomonadota</taxon>
        <taxon>Betaproteobacteria</taxon>
        <taxon>Burkholderiales</taxon>
        <taxon>Comamonadaceae</taxon>
        <taxon>Delftia</taxon>
    </lineage>
</organism>
<evidence type="ECO:0000255" key="1">
    <source>
        <dbReference type="HAMAP-Rule" id="MF_01227"/>
    </source>
</evidence>
<comment type="function">
    <text evidence="1">Catalyzes the ATP-dependent amination of UTP to CTP with either L-glutamine or ammonia as the source of nitrogen. Regulates intracellular CTP levels through interactions with the four ribonucleotide triphosphates.</text>
</comment>
<comment type="catalytic activity">
    <reaction evidence="1">
        <text>UTP + L-glutamine + ATP + H2O = CTP + L-glutamate + ADP + phosphate + 2 H(+)</text>
        <dbReference type="Rhea" id="RHEA:26426"/>
        <dbReference type="ChEBI" id="CHEBI:15377"/>
        <dbReference type="ChEBI" id="CHEBI:15378"/>
        <dbReference type="ChEBI" id="CHEBI:29985"/>
        <dbReference type="ChEBI" id="CHEBI:30616"/>
        <dbReference type="ChEBI" id="CHEBI:37563"/>
        <dbReference type="ChEBI" id="CHEBI:43474"/>
        <dbReference type="ChEBI" id="CHEBI:46398"/>
        <dbReference type="ChEBI" id="CHEBI:58359"/>
        <dbReference type="ChEBI" id="CHEBI:456216"/>
        <dbReference type="EC" id="6.3.4.2"/>
    </reaction>
</comment>
<comment type="catalytic activity">
    <reaction evidence="1">
        <text>L-glutamine + H2O = L-glutamate + NH4(+)</text>
        <dbReference type="Rhea" id="RHEA:15889"/>
        <dbReference type="ChEBI" id="CHEBI:15377"/>
        <dbReference type="ChEBI" id="CHEBI:28938"/>
        <dbReference type="ChEBI" id="CHEBI:29985"/>
        <dbReference type="ChEBI" id="CHEBI:58359"/>
    </reaction>
</comment>
<comment type="catalytic activity">
    <reaction evidence="1">
        <text>UTP + NH4(+) + ATP = CTP + ADP + phosphate + 2 H(+)</text>
        <dbReference type="Rhea" id="RHEA:16597"/>
        <dbReference type="ChEBI" id="CHEBI:15378"/>
        <dbReference type="ChEBI" id="CHEBI:28938"/>
        <dbReference type="ChEBI" id="CHEBI:30616"/>
        <dbReference type="ChEBI" id="CHEBI:37563"/>
        <dbReference type="ChEBI" id="CHEBI:43474"/>
        <dbReference type="ChEBI" id="CHEBI:46398"/>
        <dbReference type="ChEBI" id="CHEBI:456216"/>
    </reaction>
</comment>
<comment type="activity regulation">
    <text evidence="1">Allosterically activated by GTP, when glutamine is the substrate; GTP has no effect on the reaction when ammonia is the substrate. The allosteric effector GTP functions by stabilizing the protein conformation that binds the tetrahedral intermediate(s) formed during glutamine hydrolysis. Inhibited by the product CTP, via allosteric rather than competitive inhibition.</text>
</comment>
<comment type="pathway">
    <text evidence="1">Pyrimidine metabolism; CTP biosynthesis via de novo pathway; CTP from UDP: step 2/2.</text>
</comment>
<comment type="subunit">
    <text evidence="1">Homotetramer.</text>
</comment>
<comment type="miscellaneous">
    <text evidence="1">CTPSs have evolved a hybrid strategy for distinguishing between UTP and CTP. The overlapping regions of the product feedback inhibitory and substrate sites recognize a common feature in both compounds, the triphosphate moiety. To differentiate isosteric substrate and product pyrimidine rings, an additional pocket far from the expected kinase/ligase catalytic site, specifically recognizes the cytosine and ribose portions of the product inhibitor.</text>
</comment>
<comment type="similarity">
    <text evidence="1">Belongs to the CTP synthase family.</text>
</comment>